<comment type="subcellular location">
    <subcellularLocation>
        <location>Cytoplasm</location>
    </subcellularLocation>
</comment>
<comment type="induction">
    <text>By wounding and elicitor treatments.</text>
</comment>
<comment type="similarity">
    <text evidence="1">Belongs to the BetVI family.</text>
</comment>
<accession>Q05736</accession>
<protein>
    <recommendedName>
        <fullName>Pathogenesis-related protein 1</fullName>
        <shortName>AOPR1</shortName>
    </recommendedName>
</protein>
<name>PR1_ASPOF</name>
<feature type="chain" id="PRO_0000154157" description="Pathogenesis-related protein 1">
    <location>
        <begin position="1"/>
        <end position="158"/>
    </location>
</feature>
<evidence type="ECO:0000305" key="1"/>
<sequence length="158" mass="16921">MSSGSWSHEVAVNVAAGRMFKAAMLDWHNLGPKIVPDFIAGGSVVSGDGSVGTIREIKINNPAIPFSYVKERLDFVDHDKFEVKQTLVEGGGLGKMFECATTHFKFEPSSNGGCLVKVTASYKILPGVADESAKAKEGITNHMKATEAYLLANPTAYV</sequence>
<dbReference type="EMBL" id="X62103">
    <property type="protein sequence ID" value="CAA44013.1"/>
    <property type="molecule type" value="mRNA"/>
</dbReference>
<dbReference type="EMBL" id="X64452">
    <property type="protein sequence ID" value="CAA45784.1"/>
    <property type="molecule type" value="Genomic_DNA"/>
</dbReference>
<dbReference type="PIR" id="S39754">
    <property type="entry name" value="S39754"/>
</dbReference>
<dbReference type="SMR" id="Q05736"/>
<dbReference type="OrthoDB" id="1500546at2759"/>
<dbReference type="GO" id="GO:0005737">
    <property type="term" value="C:cytoplasm"/>
    <property type="evidence" value="ECO:0007669"/>
    <property type="project" value="UniProtKB-SubCell"/>
</dbReference>
<dbReference type="GO" id="GO:0005634">
    <property type="term" value="C:nucleus"/>
    <property type="evidence" value="ECO:0007669"/>
    <property type="project" value="TreeGrafter"/>
</dbReference>
<dbReference type="GO" id="GO:0010427">
    <property type="term" value="F:abscisic acid binding"/>
    <property type="evidence" value="ECO:0007669"/>
    <property type="project" value="InterPro"/>
</dbReference>
<dbReference type="GO" id="GO:0004864">
    <property type="term" value="F:protein phosphatase inhibitor activity"/>
    <property type="evidence" value="ECO:0007669"/>
    <property type="project" value="InterPro"/>
</dbReference>
<dbReference type="GO" id="GO:0038023">
    <property type="term" value="F:signaling receptor activity"/>
    <property type="evidence" value="ECO:0007669"/>
    <property type="project" value="InterPro"/>
</dbReference>
<dbReference type="GO" id="GO:0009738">
    <property type="term" value="P:abscisic acid-activated signaling pathway"/>
    <property type="evidence" value="ECO:0007669"/>
    <property type="project" value="InterPro"/>
</dbReference>
<dbReference type="GO" id="GO:0006952">
    <property type="term" value="P:defense response"/>
    <property type="evidence" value="ECO:0007669"/>
    <property type="project" value="UniProtKB-KW"/>
</dbReference>
<dbReference type="CDD" id="cd07816">
    <property type="entry name" value="Bet_v1-like"/>
    <property type="match status" value="1"/>
</dbReference>
<dbReference type="FunFam" id="3.30.530.20:FF:000007">
    <property type="entry name" value="Major pollen allergen Bet v 1-A"/>
    <property type="match status" value="1"/>
</dbReference>
<dbReference type="Gene3D" id="3.30.530.20">
    <property type="match status" value="1"/>
</dbReference>
<dbReference type="InterPro" id="IPR000916">
    <property type="entry name" value="Bet_v_I/MLP"/>
</dbReference>
<dbReference type="InterPro" id="IPR024949">
    <property type="entry name" value="Bet_v_I_allergen"/>
</dbReference>
<dbReference type="InterPro" id="IPR050279">
    <property type="entry name" value="Plant_def-hormone_signal"/>
</dbReference>
<dbReference type="InterPro" id="IPR023393">
    <property type="entry name" value="START-like_dom_sf"/>
</dbReference>
<dbReference type="PANTHER" id="PTHR31213:SF201">
    <property type="entry name" value="OS03G0300400 PROTEIN"/>
    <property type="match status" value="1"/>
</dbReference>
<dbReference type="PANTHER" id="PTHR31213">
    <property type="entry name" value="OS08G0374000 PROTEIN-RELATED"/>
    <property type="match status" value="1"/>
</dbReference>
<dbReference type="Pfam" id="PF00407">
    <property type="entry name" value="Bet_v_1"/>
    <property type="match status" value="1"/>
</dbReference>
<dbReference type="PRINTS" id="PR00634">
    <property type="entry name" value="BETALLERGEN"/>
</dbReference>
<dbReference type="SUPFAM" id="SSF55961">
    <property type="entry name" value="Bet v1-like"/>
    <property type="match status" value="1"/>
</dbReference>
<dbReference type="PROSITE" id="PS00451">
    <property type="entry name" value="PATHOGENESIS_BETVI"/>
    <property type="match status" value="1"/>
</dbReference>
<organism>
    <name type="scientific">Asparagus officinalis</name>
    <name type="common">Garden asparagus</name>
    <dbReference type="NCBI Taxonomy" id="4686"/>
    <lineage>
        <taxon>Eukaryota</taxon>
        <taxon>Viridiplantae</taxon>
        <taxon>Streptophyta</taxon>
        <taxon>Embryophyta</taxon>
        <taxon>Tracheophyta</taxon>
        <taxon>Spermatophyta</taxon>
        <taxon>Magnoliopsida</taxon>
        <taxon>Liliopsida</taxon>
        <taxon>Asparagales</taxon>
        <taxon>Asparagaceae</taxon>
        <taxon>Asparagoideae</taxon>
        <taxon>Asparagus</taxon>
    </lineage>
</organism>
<reference key="1">
    <citation type="journal article" date="1992" name="Plant Mol. Biol.">
        <title>Characterisation of a wound-induced transcript from the monocot asparagus that shares similarity with a class of intracellular pathogenesis-related (PR) proteins.</title>
        <authorList>
            <person name="Warner S.A.J."/>
            <person name="Scott R."/>
            <person name="Draper J."/>
        </authorList>
    </citation>
    <scope>NUCLEOTIDE SEQUENCE [MRNA]</scope>
</reference>
<reference key="2">
    <citation type="journal article" date="1993" name="Plant J.">
        <title>Isolation of an asparagus intracellular PR gene (AoPR1) wound-responsive promoter by the inverse polymerase chain reaction and its characterization in transgenic tobacco.</title>
        <authorList>
            <person name="Warner S.A.J."/>
            <person name="Scott R."/>
            <person name="Draper J."/>
        </authorList>
    </citation>
    <scope>NUCLEOTIDE SEQUENCE [GENOMIC DNA]</scope>
</reference>
<proteinExistence type="evidence at transcript level"/>
<gene>
    <name type="primary">PR1</name>
</gene>
<keyword id="KW-0963">Cytoplasm</keyword>
<keyword id="KW-0568">Pathogenesis-related protein</keyword>
<keyword id="KW-0611">Plant defense</keyword>